<accession>B7GYV1</accession>
<name>OBG_ACIB3</name>
<feature type="chain" id="PRO_0000385666" description="GTPase Obg">
    <location>
        <begin position="1"/>
        <end position="406"/>
    </location>
</feature>
<feature type="domain" description="Obg" evidence="2">
    <location>
        <begin position="1"/>
        <end position="159"/>
    </location>
</feature>
<feature type="domain" description="OBG-type G" evidence="1">
    <location>
        <begin position="160"/>
        <end position="333"/>
    </location>
</feature>
<feature type="region of interest" description="Disordered" evidence="3">
    <location>
        <begin position="120"/>
        <end position="143"/>
    </location>
</feature>
<feature type="region of interest" description="Disordered" evidence="3">
    <location>
        <begin position="381"/>
        <end position="406"/>
    </location>
</feature>
<feature type="compositionally biased region" description="Acidic residues" evidence="3">
    <location>
        <begin position="383"/>
        <end position="399"/>
    </location>
</feature>
<feature type="binding site" evidence="1">
    <location>
        <begin position="166"/>
        <end position="173"/>
    </location>
    <ligand>
        <name>GTP</name>
        <dbReference type="ChEBI" id="CHEBI:37565"/>
    </ligand>
</feature>
<feature type="binding site" evidence="1">
    <location>
        <position position="173"/>
    </location>
    <ligand>
        <name>Mg(2+)</name>
        <dbReference type="ChEBI" id="CHEBI:18420"/>
    </ligand>
</feature>
<feature type="binding site" evidence="1">
    <location>
        <begin position="191"/>
        <end position="195"/>
    </location>
    <ligand>
        <name>GTP</name>
        <dbReference type="ChEBI" id="CHEBI:37565"/>
    </ligand>
</feature>
<feature type="binding site" evidence="1">
    <location>
        <position position="193"/>
    </location>
    <ligand>
        <name>Mg(2+)</name>
        <dbReference type="ChEBI" id="CHEBI:18420"/>
    </ligand>
</feature>
<feature type="binding site" evidence="1">
    <location>
        <begin position="213"/>
        <end position="216"/>
    </location>
    <ligand>
        <name>GTP</name>
        <dbReference type="ChEBI" id="CHEBI:37565"/>
    </ligand>
</feature>
<feature type="binding site" evidence="1">
    <location>
        <begin position="283"/>
        <end position="286"/>
    </location>
    <ligand>
        <name>GTP</name>
        <dbReference type="ChEBI" id="CHEBI:37565"/>
    </ligand>
</feature>
<feature type="binding site" evidence="1">
    <location>
        <begin position="314"/>
        <end position="316"/>
    </location>
    <ligand>
        <name>GTP</name>
        <dbReference type="ChEBI" id="CHEBI:37565"/>
    </ligand>
</feature>
<dbReference type="EC" id="3.6.5.-" evidence="1"/>
<dbReference type="EMBL" id="CP001172">
    <property type="protein sequence ID" value="ACJ57979.1"/>
    <property type="molecule type" value="Genomic_DNA"/>
</dbReference>
<dbReference type="SMR" id="B7GYV1"/>
<dbReference type="HOGENOM" id="CLU_011747_2_0_6"/>
<dbReference type="Proteomes" id="UP000006924">
    <property type="component" value="Chromosome"/>
</dbReference>
<dbReference type="GO" id="GO:0005737">
    <property type="term" value="C:cytoplasm"/>
    <property type="evidence" value="ECO:0007669"/>
    <property type="project" value="UniProtKB-SubCell"/>
</dbReference>
<dbReference type="GO" id="GO:0005525">
    <property type="term" value="F:GTP binding"/>
    <property type="evidence" value="ECO:0007669"/>
    <property type="project" value="UniProtKB-UniRule"/>
</dbReference>
<dbReference type="GO" id="GO:0003924">
    <property type="term" value="F:GTPase activity"/>
    <property type="evidence" value="ECO:0007669"/>
    <property type="project" value="UniProtKB-UniRule"/>
</dbReference>
<dbReference type="GO" id="GO:0000287">
    <property type="term" value="F:magnesium ion binding"/>
    <property type="evidence" value="ECO:0007669"/>
    <property type="project" value="InterPro"/>
</dbReference>
<dbReference type="GO" id="GO:0042254">
    <property type="term" value="P:ribosome biogenesis"/>
    <property type="evidence" value="ECO:0007669"/>
    <property type="project" value="UniProtKB-UniRule"/>
</dbReference>
<dbReference type="CDD" id="cd01898">
    <property type="entry name" value="Obg"/>
    <property type="match status" value="1"/>
</dbReference>
<dbReference type="FunFam" id="2.70.210.12:FF:000001">
    <property type="entry name" value="GTPase Obg"/>
    <property type="match status" value="1"/>
</dbReference>
<dbReference type="Gene3D" id="2.70.210.12">
    <property type="entry name" value="GTP1/OBG domain"/>
    <property type="match status" value="1"/>
</dbReference>
<dbReference type="Gene3D" id="3.40.50.300">
    <property type="entry name" value="P-loop containing nucleotide triphosphate hydrolases"/>
    <property type="match status" value="1"/>
</dbReference>
<dbReference type="HAMAP" id="MF_01454">
    <property type="entry name" value="GTPase_Obg"/>
    <property type="match status" value="1"/>
</dbReference>
<dbReference type="InterPro" id="IPR031167">
    <property type="entry name" value="G_OBG"/>
</dbReference>
<dbReference type="InterPro" id="IPR006073">
    <property type="entry name" value="GTP-bd"/>
</dbReference>
<dbReference type="InterPro" id="IPR014100">
    <property type="entry name" value="GTP-bd_Obg/CgtA"/>
</dbReference>
<dbReference type="InterPro" id="IPR006074">
    <property type="entry name" value="GTP1-OBG_CS"/>
</dbReference>
<dbReference type="InterPro" id="IPR006169">
    <property type="entry name" value="GTP1_OBG_dom"/>
</dbReference>
<dbReference type="InterPro" id="IPR036726">
    <property type="entry name" value="GTP1_OBG_dom_sf"/>
</dbReference>
<dbReference type="InterPro" id="IPR045086">
    <property type="entry name" value="OBG_GTPase"/>
</dbReference>
<dbReference type="InterPro" id="IPR027417">
    <property type="entry name" value="P-loop_NTPase"/>
</dbReference>
<dbReference type="NCBIfam" id="TIGR02729">
    <property type="entry name" value="Obg_CgtA"/>
    <property type="match status" value="1"/>
</dbReference>
<dbReference type="NCBIfam" id="NF008955">
    <property type="entry name" value="PRK12297.1"/>
    <property type="match status" value="1"/>
</dbReference>
<dbReference type="NCBIfam" id="NF008956">
    <property type="entry name" value="PRK12299.1"/>
    <property type="match status" value="1"/>
</dbReference>
<dbReference type="PANTHER" id="PTHR11702">
    <property type="entry name" value="DEVELOPMENTALLY REGULATED GTP-BINDING PROTEIN-RELATED"/>
    <property type="match status" value="1"/>
</dbReference>
<dbReference type="PANTHER" id="PTHR11702:SF31">
    <property type="entry name" value="MITOCHONDRIAL RIBOSOME-ASSOCIATED GTPASE 2"/>
    <property type="match status" value="1"/>
</dbReference>
<dbReference type="Pfam" id="PF01018">
    <property type="entry name" value="GTP1_OBG"/>
    <property type="match status" value="1"/>
</dbReference>
<dbReference type="Pfam" id="PF01926">
    <property type="entry name" value="MMR_HSR1"/>
    <property type="match status" value="1"/>
</dbReference>
<dbReference type="PIRSF" id="PIRSF002401">
    <property type="entry name" value="GTP_bd_Obg/CgtA"/>
    <property type="match status" value="1"/>
</dbReference>
<dbReference type="PRINTS" id="PR00326">
    <property type="entry name" value="GTP1OBG"/>
</dbReference>
<dbReference type="SUPFAM" id="SSF82051">
    <property type="entry name" value="Obg GTP-binding protein N-terminal domain"/>
    <property type="match status" value="1"/>
</dbReference>
<dbReference type="SUPFAM" id="SSF52540">
    <property type="entry name" value="P-loop containing nucleoside triphosphate hydrolases"/>
    <property type="match status" value="1"/>
</dbReference>
<dbReference type="PROSITE" id="PS51710">
    <property type="entry name" value="G_OBG"/>
    <property type="match status" value="1"/>
</dbReference>
<dbReference type="PROSITE" id="PS00905">
    <property type="entry name" value="GTP1_OBG"/>
    <property type="match status" value="1"/>
</dbReference>
<dbReference type="PROSITE" id="PS51883">
    <property type="entry name" value="OBG"/>
    <property type="match status" value="1"/>
</dbReference>
<comment type="function">
    <text evidence="1">An essential GTPase which binds GTP, GDP and possibly (p)ppGpp with moderate affinity, with high nucleotide exchange rates and a fairly low GTP hydrolysis rate. Plays a role in control of the cell cycle, stress response, ribosome biogenesis and in those bacteria that undergo differentiation, in morphogenesis control.</text>
</comment>
<comment type="cofactor">
    <cofactor evidence="1">
        <name>Mg(2+)</name>
        <dbReference type="ChEBI" id="CHEBI:18420"/>
    </cofactor>
</comment>
<comment type="subunit">
    <text evidence="1">Monomer.</text>
</comment>
<comment type="subcellular location">
    <subcellularLocation>
        <location evidence="1">Cytoplasm</location>
    </subcellularLocation>
</comment>
<comment type="similarity">
    <text evidence="1">Belongs to the TRAFAC class OBG-HflX-like GTPase superfamily. OBG GTPase family.</text>
</comment>
<keyword id="KW-0963">Cytoplasm</keyword>
<keyword id="KW-0342">GTP-binding</keyword>
<keyword id="KW-0378">Hydrolase</keyword>
<keyword id="KW-0460">Magnesium</keyword>
<keyword id="KW-0479">Metal-binding</keyword>
<keyword id="KW-0547">Nucleotide-binding</keyword>
<gene>
    <name evidence="1" type="primary">obg</name>
    <name type="ordered locus">ABBFA_000948</name>
</gene>
<reference key="1">
    <citation type="journal article" date="2008" name="J. Bacteriol.">
        <title>Comparative genome sequence analysis of multidrug-resistant Acinetobacter baumannii.</title>
        <authorList>
            <person name="Adams M.D."/>
            <person name="Goglin K."/>
            <person name="Molyneaux N."/>
            <person name="Hujer K.M."/>
            <person name="Lavender H."/>
            <person name="Jamison J.J."/>
            <person name="MacDonald I.J."/>
            <person name="Martin K.M."/>
            <person name="Russo T."/>
            <person name="Campagnari A.A."/>
            <person name="Hujer A.M."/>
            <person name="Bonomo R.A."/>
            <person name="Gill S.R."/>
        </authorList>
    </citation>
    <scope>NUCLEOTIDE SEQUENCE [LARGE SCALE GENOMIC DNA]</scope>
    <source>
        <strain>AB307-0294</strain>
    </source>
</reference>
<evidence type="ECO:0000255" key="1">
    <source>
        <dbReference type="HAMAP-Rule" id="MF_01454"/>
    </source>
</evidence>
<evidence type="ECO:0000255" key="2">
    <source>
        <dbReference type="PROSITE-ProRule" id="PRU01231"/>
    </source>
</evidence>
<evidence type="ECO:0000256" key="3">
    <source>
        <dbReference type="SAM" id="MobiDB-lite"/>
    </source>
</evidence>
<protein>
    <recommendedName>
        <fullName evidence="1">GTPase Obg</fullName>
        <ecNumber evidence="1">3.6.5.-</ecNumber>
    </recommendedName>
    <alternativeName>
        <fullName evidence="1">GTP-binding protein Obg</fullName>
    </alternativeName>
</protein>
<proteinExistence type="inferred from homology"/>
<sequence length="406" mass="44462">MRFVDEAVITVEAGDGGNGVASFRREKFVPFGGPDGGDGGRGGSIYIQADDDTSTLVDYRYTRKFRAERGKNGAGANCTGRGGEDVVLKVPVGTTIVDTDSGDIIGDLVEDGQRVMVASGGEGGLGNTHFKSSTNRAPRKCTTGTKGEFREIRLELKVLADVGLLGMPNAGKSTFIRAVSAAKPKVADYPFTTMVPNLGVVDADRHRSFVMADIPGLIEGAAEGAGLGIRFLKHLARTRILLHIIDVQPIDGSDPAHNAKAIMNELAKFSPTLAKLPIVLVLNKLDQIAEESREEWCQHILDELQWTGPVFKTSGLLEEGTKEVVYYLMDQIEQQREREVEDPEYAAEVRAFREQLEAETREQTIAAKEAYRAMRKAQRLESMMDDDDDFDDDEDDGDVESIYVRD</sequence>
<organism>
    <name type="scientific">Acinetobacter baumannii (strain AB307-0294)</name>
    <dbReference type="NCBI Taxonomy" id="557600"/>
    <lineage>
        <taxon>Bacteria</taxon>
        <taxon>Pseudomonadati</taxon>
        <taxon>Pseudomonadota</taxon>
        <taxon>Gammaproteobacteria</taxon>
        <taxon>Moraxellales</taxon>
        <taxon>Moraxellaceae</taxon>
        <taxon>Acinetobacter</taxon>
        <taxon>Acinetobacter calcoaceticus/baumannii complex</taxon>
    </lineage>
</organism>